<organism>
    <name type="scientific">Novosphingobium aromaticivorans (strain ATCC 700278 / DSM 12444 / CCUG 56034 / CIP 105152 / NBRC 16084 / F199)</name>
    <dbReference type="NCBI Taxonomy" id="279238"/>
    <lineage>
        <taxon>Bacteria</taxon>
        <taxon>Pseudomonadati</taxon>
        <taxon>Pseudomonadota</taxon>
        <taxon>Alphaproteobacteria</taxon>
        <taxon>Sphingomonadales</taxon>
        <taxon>Sphingomonadaceae</taxon>
        <taxon>Novosphingobium</taxon>
    </lineage>
</organism>
<accession>Q2G550</accession>
<sequence>MTDLALIRNFSIIAHIDHGKSTLADRLIQYTGGLTEREMSEQVLDNMDIEKERGITIKAQTVRLDYTGKDGKTYQLNLMDTPGHVDFAYEVSRSLAACEGALLVVDAAQGVEAQTLANVYQSIEHDHEIVPVINKIDLPAAEPEKVKAEIEDVIGLDASNAVLTSAKSGIGIEEVLDAVVERIPPPKGDRSAPLKAMLVDSWYDPYLGVVILVRVIDGVIRKGLQVKFMAGGTEHLIDRVGCMRPKIETLDELGPGEIGFITAQIKEVAQARVGDTITTVKQGASEALPGFKEVQPVVFCGIFPVDAADFEKLRESIAKLRLNDASFSFEMESSAALGFGFRCGFLGLLHLEIIQERLSREYDLDLITTAPSVVYRIQLRASRNDDAREILLHNPADYPDPSRIETIEEPWIKGTIYTPDEYLGSVLKLCQDRRGIQTGLTYVGGRAQVTYELPLNEVVFDFYDRLKSISRGYASFDYEQVGLREGDLVKMSILVNNEPVDALSMIVHRSAAEARGRHMCERLKDLIPRHLFKIPIQAAIGGKVVARETISAMRKDVTAKCYGGDITRKKKLLEKQKKGKARMREYGNVSIPQEAFIAALRMGEE</sequence>
<protein>
    <recommendedName>
        <fullName evidence="1">Elongation factor 4</fullName>
        <shortName evidence="1">EF-4</shortName>
        <ecNumber evidence="1">3.6.5.n1</ecNumber>
    </recommendedName>
    <alternativeName>
        <fullName evidence="1">Ribosomal back-translocase LepA</fullName>
    </alternativeName>
</protein>
<comment type="function">
    <text evidence="1">Required for accurate and efficient protein synthesis under certain stress conditions. May act as a fidelity factor of the translation reaction, by catalyzing a one-codon backward translocation of tRNAs on improperly translocated ribosomes. Back-translocation proceeds from a post-translocation (POST) complex to a pre-translocation (PRE) complex, thus giving elongation factor G a second chance to translocate the tRNAs correctly. Binds to ribosomes in a GTP-dependent manner.</text>
</comment>
<comment type="catalytic activity">
    <reaction evidence="1">
        <text>GTP + H2O = GDP + phosphate + H(+)</text>
        <dbReference type="Rhea" id="RHEA:19669"/>
        <dbReference type="ChEBI" id="CHEBI:15377"/>
        <dbReference type="ChEBI" id="CHEBI:15378"/>
        <dbReference type="ChEBI" id="CHEBI:37565"/>
        <dbReference type="ChEBI" id="CHEBI:43474"/>
        <dbReference type="ChEBI" id="CHEBI:58189"/>
        <dbReference type="EC" id="3.6.5.n1"/>
    </reaction>
</comment>
<comment type="subcellular location">
    <subcellularLocation>
        <location evidence="1">Cell inner membrane</location>
        <topology evidence="1">Peripheral membrane protein</topology>
        <orientation evidence="1">Cytoplasmic side</orientation>
    </subcellularLocation>
</comment>
<comment type="similarity">
    <text evidence="1">Belongs to the TRAFAC class translation factor GTPase superfamily. Classic translation factor GTPase family. LepA subfamily.</text>
</comment>
<dbReference type="EC" id="3.6.5.n1" evidence="1"/>
<dbReference type="EMBL" id="CP000248">
    <property type="protein sequence ID" value="ABD27023.1"/>
    <property type="molecule type" value="Genomic_DNA"/>
</dbReference>
<dbReference type="RefSeq" id="WP_011446229.1">
    <property type="nucleotide sequence ID" value="NC_007794.1"/>
</dbReference>
<dbReference type="SMR" id="Q2G550"/>
<dbReference type="STRING" id="279238.Saro_2587"/>
<dbReference type="KEGG" id="nar:Saro_2587"/>
<dbReference type="eggNOG" id="COG0481">
    <property type="taxonomic scope" value="Bacteria"/>
</dbReference>
<dbReference type="HOGENOM" id="CLU_009995_3_3_5"/>
<dbReference type="Proteomes" id="UP000009134">
    <property type="component" value="Chromosome"/>
</dbReference>
<dbReference type="GO" id="GO:0005886">
    <property type="term" value="C:plasma membrane"/>
    <property type="evidence" value="ECO:0007669"/>
    <property type="project" value="UniProtKB-SubCell"/>
</dbReference>
<dbReference type="GO" id="GO:0005525">
    <property type="term" value="F:GTP binding"/>
    <property type="evidence" value="ECO:0007669"/>
    <property type="project" value="UniProtKB-UniRule"/>
</dbReference>
<dbReference type="GO" id="GO:0003924">
    <property type="term" value="F:GTPase activity"/>
    <property type="evidence" value="ECO:0007669"/>
    <property type="project" value="UniProtKB-UniRule"/>
</dbReference>
<dbReference type="GO" id="GO:0097216">
    <property type="term" value="F:guanosine tetraphosphate binding"/>
    <property type="evidence" value="ECO:0007669"/>
    <property type="project" value="UniProtKB-ARBA"/>
</dbReference>
<dbReference type="GO" id="GO:0043022">
    <property type="term" value="F:ribosome binding"/>
    <property type="evidence" value="ECO:0007669"/>
    <property type="project" value="UniProtKB-UniRule"/>
</dbReference>
<dbReference type="GO" id="GO:0003746">
    <property type="term" value="F:translation elongation factor activity"/>
    <property type="evidence" value="ECO:0007669"/>
    <property type="project" value="UniProtKB-UniRule"/>
</dbReference>
<dbReference type="GO" id="GO:0045727">
    <property type="term" value="P:positive regulation of translation"/>
    <property type="evidence" value="ECO:0007669"/>
    <property type="project" value="UniProtKB-UniRule"/>
</dbReference>
<dbReference type="CDD" id="cd03699">
    <property type="entry name" value="EF4_II"/>
    <property type="match status" value="1"/>
</dbReference>
<dbReference type="CDD" id="cd16260">
    <property type="entry name" value="EF4_III"/>
    <property type="match status" value="1"/>
</dbReference>
<dbReference type="CDD" id="cd01890">
    <property type="entry name" value="LepA"/>
    <property type="match status" value="1"/>
</dbReference>
<dbReference type="CDD" id="cd03709">
    <property type="entry name" value="lepA_C"/>
    <property type="match status" value="1"/>
</dbReference>
<dbReference type="FunFam" id="3.40.50.300:FF:000078">
    <property type="entry name" value="Elongation factor 4"/>
    <property type="match status" value="1"/>
</dbReference>
<dbReference type="FunFam" id="2.40.30.10:FF:000015">
    <property type="entry name" value="Translation factor GUF1, mitochondrial"/>
    <property type="match status" value="1"/>
</dbReference>
<dbReference type="FunFam" id="3.30.70.240:FF:000007">
    <property type="entry name" value="Translation factor GUF1, mitochondrial"/>
    <property type="match status" value="1"/>
</dbReference>
<dbReference type="FunFam" id="3.30.70.2570:FF:000001">
    <property type="entry name" value="Translation factor GUF1, mitochondrial"/>
    <property type="match status" value="1"/>
</dbReference>
<dbReference type="FunFam" id="3.30.70.870:FF:000004">
    <property type="entry name" value="Translation factor GUF1, mitochondrial"/>
    <property type="match status" value="1"/>
</dbReference>
<dbReference type="Gene3D" id="3.30.70.240">
    <property type="match status" value="1"/>
</dbReference>
<dbReference type="Gene3D" id="3.30.70.2570">
    <property type="entry name" value="Elongation factor 4, C-terminal domain"/>
    <property type="match status" value="1"/>
</dbReference>
<dbReference type="Gene3D" id="3.30.70.870">
    <property type="entry name" value="Elongation Factor G (Translational Gtpase), domain 3"/>
    <property type="match status" value="1"/>
</dbReference>
<dbReference type="Gene3D" id="3.40.50.300">
    <property type="entry name" value="P-loop containing nucleotide triphosphate hydrolases"/>
    <property type="match status" value="1"/>
</dbReference>
<dbReference type="Gene3D" id="2.40.30.10">
    <property type="entry name" value="Translation factors"/>
    <property type="match status" value="1"/>
</dbReference>
<dbReference type="HAMAP" id="MF_00071">
    <property type="entry name" value="LepA"/>
    <property type="match status" value="1"/>
</dbReference>
<dbReference type="InterPro" id="IPR006297">
    <property type="entry name" value="EF-4"/>
</dbReference>
<dbReference type="InterPro" id="IPR041095">
    <property type="entry name" value="EFG_II"/>
</dbReference>
<dbReference type="InterPro" id="IPR035647">
    <property type="entry name" value="EFG_III/V"/>
</dbReference>
<dbReference type="InterPro" id="IPR000640">
    <property type="entry name" value="EFG_V-like"/>
</dbReference>
<dbReference type="InterPro" id="IPR004161">
    <property type="entry name" value="EFTu-like_2"/>
</dbReference>
<dbReference type="InterPro" id="IPR031157">
    <property type="entry name" value="G_TR_CS"/>
</dbReference>
<dbReference type="InterPro" id="IPR038363">
    <property type="entry name" value="LepA_C_sf"/>
</dbReference>
<dbReference type="InterPro" id="IPR013842">
    <property type="entry name" value="LepA_CTD"/>
</dbReference>
<dbReference type="InterPro" id="IPR035654">
    <property type="entry name" value="LepA_IV"/>
</dbReference>
<dbReference type="InterPro" id="IPR027417">
    <property type="entry name" value="P-loop_NTPase"/>
</dbReference>
<dbReference type="InterPro" id="IPR005225">
    <property type="entry name" value="Small_GTP-bd"/>
</dbReference>
<dbReference type="InterPro" id="IPR000795">
    <property type="entry name" value="T_Tr_GTP-bd_dom"/>
</dbReference>
<dbReference type="NCBIfam" id="TIGR01393">
    <property type="entry name" value="lepA"/>
    <property type="match status" value="1"/>
</dbReference>
<dbReference type="NCBIfam" id="TIGR00231">
    <property type="entry name" value="small_GTP"/>
    <property type="match status" value="1"/>
</dbReference>
<dbReference type="PANTHER" id="PTHR43512:SF4">
    <property type="entry name" value="TRANSLATION FACTOR GUF1 HOMOLOG, CHLOROPLASTIC"/>
    <property type="match status" value="1"/>
</dbReference>
<dbReference type="PANTHER" id="PTHR43512">
    <property type="entry name" value="TRANSLATION FACTOR GUF1-RELATED"/>
    <property type="match status" value="1"/>
</dbReference>
<dbReference type="Pfam" id="PF00679">
    <property type="entry name" value="EFG_C"/>
    <property type="match status" value="1"/>
</dbReference>
<dbReference type="Pfam" id="PF14492">
    <property type="entry name" value="EFG_III"/>
    <property type="match status" value="1"/>
</dbReference>
<dbReference type="Pfam" id="PF00009">
    <property type="entry name" value="GTP_EFTU"/>
    <property type="match status" value="1"/>
</dbReference>
<dbReference type="Pfam" id="PF03144">
    <property type="entry name" value="GTP_EFTU_D2"/>
    <property type="match status" value="1"/>
</dbReference>
<dbReference type="Pfam" id="PF06421">
    <property type="entry name" value="LepA_C"/>
    <property type="match status" value="1"/>
</dbReference>
<dbReference type="PRINTS" id="PR00315">
    <property type="entry name" value="ELONGATNFCT"/>
</dbReference>
<dbReference type="SUPFAM" id="SSF54980">
    <property type="entry name" value="EF-G C-terminal domain-like"/>
    <property type="match status" value="2"/>
</dbReference>
<dbReference type="SUPFAM" id="SSF52540">
    <property type="entry name" value="P-loop containing nucleoside triphosphate hydrolases"/>
    <property type="match status" value="1"/>
</dbReference>
<dbReference type="PROSITE" id="PS00301">
    <property type="entry name" value="G_TR_1"/>
    <property type="match status" value="1"/>
</dbReference>
<dbReference type="PROSITE" id="PS51722">
    <property type="entry name" value="G_TR_2"/>
    <property type="match status" value="1"/>
</dbReference>
<reference key="1">
    <citation type="submission" date="2006-01" db="EMBL/GenBank/DDBJ databases">
        <title>Complete sequence of Novosphingobium aromaticivorans DSM 12444.</title>
        <authorList>
            <consortium name="US DOE Joint Genome Institute"/>
            <person name="Copeland A."/>
            <person name="Lucas S."/>
            <person name="Lapidus A."/>
            <person name="Barry K."/>
            <person name="Detter J.C."/>
            <person name="Glavina T."/>
            <person name="Hammon N."/>
            <person name="Israni S."/>
            <person name="Pitluck S."/>
            <person name="Chain P."/>
            <person name="Malfatti S."/>
            <person name="Shin M."/>
            <person name="Vergez L."/>
            <person name="Schmutz J."/>
            <person name="Larimer F."/>
            <person name="Land M."/>
            <person name="Kyrpides N."/>
            <person name="Ivanova N."/>
            <person name="Fredrickson J."/>
            <person name="Balkwill D."/>
            <person name="Romine M.F."/>
            <person name="Richardson P."/>
        </authorList>
    </citation>
    <scope>NUCLEOTIDE SEQUENCE [LARGE SCALE GENOMIC DNA]</scope>
    <source>
        <strain>ATCC 700278 / DSM 12444 / CCUG 56034 / CIP 105152 / NBRC 16084 / F199</strain>
    </source>
</reference>
<feature type="chain" id="PRO_0000265682" description="Elongation factor 4">
    <location>
        <begin position="1"/>
        <end position="605"/>
    </location>
</feature>
<feature type="domain" description="tr-type G">
    <location>
        <begin position="5"/>
        <end position="187"/>
    </location>
</feature>
<feature type="binding site" evidence="1">
    <location>
        <begin position="17"/>
        <end position="22"/>
    </location>
    <ligand>
        <name>GTP</name>
        <dbReference type="ChEBI" id="CHEBI:37565"/>
    </ligand>
</feature>
<feature type="binding site" evidence="1">
    <location>
        <begin position="134"/>
        <end position="137"/>
    </location>
    <ligand>
        <name>GTP</name>
        <dbReference type="ChEBI" id="CHEBI:37565"/>
    </ligand>
</feature>
<proteinExistence type="inferred from homology"/>
<gene>
    <name evidence="1" type="primary">lepA</name>
    <name type="ordered locus">Saro_2587</name>
</gene>
<name>LEPA_NOVAD</name>
<keyword id="KW-0997">Cell inner membrane</keyword>
<keyword id="KW-1003">Cell membrane</keyword>
<keyword id="KW-0342">GTP-binding</keyword>
<keyword id="KW-0378">Hydrolase</keyword>
<keyword id="KW-0472">Membrane</keyword>
<keyword id="KW-0547">Nucleotide-binding</keyword>
<keyword id="KW-0648">Protein biosynthesis</keyword>
<keyword id="KW-1185">Reference proteome</keyword>
<evidence type="ECO:0000255" key="1">
    <source>
        <dbReference type="HAMAP-Rule" id="MF_00071"/>
    </source>
</evidence>